<organism>
    <name type="scientific">Mycoplasmoides gallisepticum (strain R(low / passage 15 / clone 2))</name>
    <name type="common">Mycoplasma gallisepticum</name>
    <dbReference type="NCBI Taxonomy" id="710127"/>
    <lineage>
        <taxon>Bacteria</taxon>
        <taxon>Bacillati</taxon>
        <taxon>Mycoplasmatota</taxon>
        <taxon>Mycoplasmoidales</taxon>
        <taxon>Mycoplasmoidaceae</taxon>
        <taxon>Mycoplasmoides</taxon>
    </lineage>
</organism>
<reference key="1">
    <citation type="journal article" date="2003" name="Microbiology">
        <title>The complete genome sequence of the avian pathogen Mycoplasma gallisepticum strain R(low).</title>
        <authorList>
            <person name="Papazisi L."/>
            <person name="Gorton T.S."/>
            <person name="Kutish G."/>
            <person name="Markham P.F."/>
            <person name="Browning G.F."/>
            <person name="Nguyen D.K."/>
            <person name="Swartzell S."/>
            <person name="Madan A."/>
            <person name="Mahairas G."/>
            <person name="Geary S.J."/>
        </authorList>
    </citation>
    <scope>NUCLEOTIDE SEQUENCE [LARGE SCALE GENOMIC DNA]</scope>
    <source>
        <strain>R(low / passage 15 / clone 2)</strain>
    </source>
</reference>
<reference key="2">
    <citation type="journal article" date="2006" name="Infect. Immun.">
        <title>Identification of fibronectin-binding proteins in Mycoplasma gallisepticum strain R.</title>
        <authorList>
            <person name="May M."/>
            <person name="Papazisi L."/>
            <person name="Gorton T.S."/>
            <person name="Geary S.J."/>
        </authorList>
    </citation>
    <scope>PROTEIN SEQUENCE OF 621-627</scope>
    <scope>FIBRONECTIN-BINDING</scope>
    <source>
        <strain>R(high / passage 164)</strain>
        <strain>R(low / passage 14)</strain>
    </source>
</reference>
<gene>
    <name type="primary">hlp3</name>
    <name type="synonym">hmw3</name>
    <name type="ordered locus">MYCGA1770</name>
    <name type="ORF">MGA_0928</name>
</gene>
<protein>
    <recommendedName>
        <fullName>Cytadherence high molecular weight protein 3</fullName>
    </recommendedName>
    <alternativeName>
        <fullName>Accessory adhesin protein 3</fullName>
    </alternativeName>
    <alternativeName>
        <fullName>Cytadherence accessory protein 3</fullName>
    </alternativeName>
</protein>
<comment type="function">
    <text>Binds immobilized fibronectin.</text>
</comment>
<comment type="function">
    <text evidence="1">Component of the cytoskeleton-like structure which stabilizes the shape of the wall-less mycoplasma. This cytoskeleton-like network of accessory proteins containing HMW proteins 1 to 5 allows the proper anchoring of cytadhesin proteins in the mycoplasmal membrane at the attachment organelle. Essential for successful surface parasitism (By similarity).</text>
</comment>
<comment type="subcellular location">
    <subcellularLocation>
        <location evidence="1">Cell projection</location>
        <location evidence="1">Attachment organelle membrane</location>
    </subcellularLocation>
    <text evidence="1">Localizes specifically to the attachment membrane.</text>
</comment>
<comment type="polymorphism">
    <text>Runs as a smaller protein in high passage extracts (passage 164) versus low passage (passage 14) that shares the same N-terminus. Sequencing has shown this smaller version to be due to an internal 54 bp deletion.</text>
</comment>
<evidence type="ECO:0000250" key="1"/>
<evidence type="ECO:0000255" key="2"/>
<evidence type="ECO:0000256" key="3">
    <source>
        <dbReference type="SAM" id="MobiDB-lite"/>
    </source>
</evidence>
<sequence length="1076" mass="126432">MIMNPKIHNKILKNLAKLKKKVFTKYAAYDFNFAYDKNGNVYLVGVDNVTNQTFNLIKPVFKFLKKPLPAELYGMDQQPFYFVNNHHYIDALNSDTGEQELLRYNVIDQSLVNAQTNDLVDPAFYTDLEGYELDLSQYTGSLLDLSNEVISVEQQPVEQEVNLTPEQVEEAEQVEQQPVDQQQVQQVDPNLNEQPVEGDNQNFTQQYYDQQLGYADQNVDYGYDPQQYTQEQDYVDNTQQYDQVQDYVDPNQQYYDDQQQYDQQGYDQGYDQQYDQQGYDQQGYDQGYDQQYDQQYYDDQQQYDEQPDQQVKAVVEQVVDEVVEEQQPVEVAKPAPTKPVGPKPQPGKKATKYVIKKPEPKPKVVKEEPIEPAVEKEEVVTVVEQVVDQPVQVAEVQPEPVVVADDEIKLASEQPVKKKINLDDLQQIPVVIKLPKFETPKLPEPKADSEQKEEIAVKVVEQPVENPQVQETKHHHALPKVKIEKRQEVELVPSKLDDHYDLIEEEDDFFVDKFKFEDIKLSDLLVEQKPIEVNQPVQQPVVLEQSTPSVQAQPQSVEPKLEITKLEELVEIKTDNTESLNKLETLIDENKKIIDQFKQLKEEAKKSNSNINLEKVAKQLVDYLTNKLNEKTAALNKPEPSTVELNKVEQAKQKAVEKLVHEQVVFQPREKVVQQPKEVVAKPYFEESDDLLTSVSNKPKQPTSELLDFLVQQVVDGEEDDLPPPTNFDKWPNQNVRQKLDEINQVEAQRFNQTQFVPPQSLNQVETPNQRLFLEPEIQVQPQALYTASREHEQVQPKAQHQQPTTRIEREEVVNKFQREPLVSPNRLAYHSNKEFDDLYQNHYEQRTARINPQDSYYDQGYEQPDPYQEQQPYPQEQYLDPRYQQQVDPRYQKETYQEYNRPFPPNQEYDYYPPAYESRRDYQPYQPRRVNYEVRKPLAYEFSKQPAPRRYQQLPNRYNESDQSRQLAYPVHKGTLRTEADFLRFREGYGYDYDRPSTQYYRSNYDTYVREVRRPIRQLGMIEPVAEFRSRTLAPRRVARPTYGLRRVSRIPSLAPRGYNQQPRVRRVPVSRGYW</sequence>
<accession>Q7NBT3</accession>
<keyword id="KW-1003">Cell membrane</keyword>
<keyword id="KW-0966">Cell projection</keyword>
<keyword id="KW-0175">Coiled coil</keyword>
<keyword id="KW-0200">Cytadherence</keyword>
<keyword id="KW-0903">Direct protein sequencing</keyword>
<keyword id="KW-0472">Membrane</keyword>
<keyword id="KW-1185">Reference proteome</keyword>
<keyword id="KW-0843">Virulence</keyword>
<name>HMW3_MYCGA</name>
<dbReference type="EMBL" id="AE015450">
    <property type="protein sequence ID" value="AAP56527.2"/>
    <property type="molecule type" value="Genomic_DNA"/>
</dbReference>
<dbReference type="RefSeq" id="WP_011113409.1">
    <property type="nucleotide sequence ID" value="NC_004829.2"/>
</dbReference>
<dbReference type="SMR" id="Q7NBT3"/>
<dbReference type="GeneID" id="93510006"/>
<dbReference type="KEGG" id="mga:MGA_0928"/>
<dbReference type="PATRIC" id="fig|233150.7.peg.194"/>
<dbReference type="HOGENOM" id="CLU_289644_0_0_14"/>
<dbReference type="OrthoDB" id="9996153at2"/>
<dbReference type="Proteomes" id="UP000001418">
    <property type="component" value="Chromosome"/>
</dbReference>
<dbReference type="GO" id="GO:0033111">
    <property type="term" value="C:attachment organelle membrane"/>
    <property type="evidence" value="ECO:0007669"/>
    <property type="project" value="UniProtKB-SubCell"/>
</dbReference>
<dbReference type="GO" id="GO:0042995">
    <property type="term" value="C:cell projection"/>
    <property type="evidence" value="ECO:0007669"/>
    <property type="project" value="UniProtKB-KW"/>
</dbReference>
<dbReference type="GO" id="GO:0005886">
    <property type="term" value="C:plasma membrane"/>
    <property type="evidence" value="ECO:0007669"/>
    <property type="project" value="UniProtKB-KW"/>
</dbReference>
<dbReference type="GO" id="GO:0020035">
    <property type="term" value="P:adhesion of symbiont to microvasculature"/>
    <property type="evidence" value="ECO:0007669"/>
    <property type="project" value="UniProtKB-KW"/>
</dbReference>
<feature type="chain" id="PRO_0000380121" description="Cytadherence high molecular weight protein 3">
    <location>
        <begin position="1"/>
        <end position="1076"/>
    </location>
</feature>
<feature type="region of interest" description="Fibronectin-binding">
    <location>
        <begin position="264"/>
        <end position="284"/>
    </location>
</feature>
<feature type="region of interest" description="Disordered" evidence="3">
    <location>
        <begin position="326"/>
        <end position="351"/>
    </location>
</feature>
<feature type="region of interest" description="Disordered" evidence="3">
    <location>
        <begin position="789"/>
        <end position="808"/>
    </location>
</feature>
<feature type="region of interest" description="Disordered" evidence="3">
    <location>
        <begin position="850"/>
        <end position="873"/>
    </location>
</feature>
<feature type="coiled-coil region" evidence="2">
    <location>
        <begin position="562"/>
        <end position="616"/>
    </location>
</feature>
<feature type="compositionally biased region" description="Low complexity" evidence="3">
    <location>
        <begin position="326"/>
        <end position="335"/>
    </location>
</feature>
<feature type="compositionally biased region" description="Pro residues" evidence="3">
    <location>
        <begin position="336"/>
        <end position="345"/>
    </location>
</feature>
<feature type="compositionally biased region" description="Polar residues" evidence="3">
    <location>
        <begin position="797"/>
        <end position="806"/>
    </location>
</feature>
<feature type="compositionally biased region" description="Low complexity" evidence="3">
    <location>
        <begin position="862"/>
        <end position="873"/>
    </location>
</feature>
<feature type="sequence variant" description="In high passage 164 isolate.">
    <location>
        <begin position="265"/>
        <end position="282"/>
    </location>
</feature>
<proteinExistence type="evidence at protein level"/>